<evidence type="ECO:0000255" key="1">
    <source>
        <dbReference type="HAMAP-Rule" id="MF_00600"/>
    </source>
</evidence>
<name>CH60_DEHMC</name>
<comment type="function">
    <text evidence="1">Together with its co-chaperonin GroES, plays an essential role in assisting protein folding. The GroEL-GroES system forms a nano-cage that allows encapsulation of the non-native substrate proteins and provides a physical environment optimized to promote and accelerate protein folding.</text>
</comment>
<comment type="catalytic activity">
    <reaction evidence="1">
        <text>ATP + H2O + a folded polypeptide = ADP + phosphate + an unfolded polypeptide.</text>
        <dbReference type="EC" id="5.6.1.7"/>
    </reaction>
</comment>
<comment type="subunit">
    <text evidence="1">Forms a cylinder of 14 subunits composed of two heptameric rings stacked back-to-back. Interacts with the co-chaperonin GroES.</text>
</comment>
<comment type="subcellular location">
    <subcellularLocation>
        <location evidence="1">Cytoplasm</location>
    </subcellularLocation>
</comment>
<comment type="similarity">
    <text evidence="1">Belongs to the chaperonin (HSP60) family.</text>
</comment>
<sequence length="537" mass="57125">MAKQIIFGEKVRVSLKKGVDTLANTVRVTLGPKGHPVALERKWGAPTVIDDGVTIARDIELPDAFENMGAQLVKEAATRTSDAAGDGTTTSIVLAQAIINEAFKNIAAGAEPINLKRGIEKAVAALKAQLRKNSTPVKGKQQIVQVATITGKDPEIGNLIADVMDKVGKDGVITIEESRGLRYETSYVEGMQFDRGYISAYFVTDPGRMESVMEDATILMTDRKIETVAELLPALEKILQISKNLVIVAENVEAEALATLVVNKLRGNLNILAVKAPGYGDRQKAMLEDMAILTGGHVISKEAGRKLDSVTEADLGHARRIVSNKDKTTIIDGEGSAEAIKDRIKQIKAQIEETESAFDREKLQERQAALVGGVAVIAVGAATETEMKERKARVEDALAATRAAIEEGILPGGGTGLLNALPCLDALKLEGDEATGVNIVRKALIEPVRWIATNAGKDGNVIVDKVKNSPVGHGYNAENDVFGDMAEMGIIDPTMVVRSALENAASIANMVLITDSLVADIQEKAPAAPGPEAAGMY</sequence>
<accession>Q3ZYW8</accession>
<protein>
    <recommendedName>
        <fullName evidence="1">Chaperonin GroEL</fullName>
        <ecNumber evidence="1">5.6.1.7</ecNumber>
    </recommendedName>
    <alternativeName>
        <fullName evidence="1">60 kDa chaperonin</fullName>
    </alternativeName>
    <alternativeName>
        <fullName evidence="1">Chaperonin-60</fullName>
        <shortName evidence="1">Cpn60</shortName>
    </alternativeName>
</protein>
<proteinExistence type="inferred from homology"/>
<dbReference type="EC" id="5.6.1.7" evidence="1"/>
<dbReference type="EMBL" id="AJ965256">
    <property type="protein sequence ID" value="CAI83436.1"/>
    <property type="molecule type" value="Genomic_DNA"/>
</dbReference>
<dbReference type="RefSeq" id="WP_011309787.1">
    <property type="nucleotide sequence ID" value="NC_007356.1"/>
</dbReference>
<dbReference type="SMR" id="Q3ZYW8"/>
<dbReference type="KEGG" id="deh:cbdbA1393"/>
<dbReference type="HOGENOM" id="CLU_016503_3_0_0"/>
<dbReference type="Proteomes" id="UP000000433">
    <property type="component" value="Chromosome"/>
</dbReference>
<dbReference type="GO" id="GO:0005737">
    <property type="term" value="C:cytoplasm"/>
    <property type="evidence" value="ECO:0007669"/>
    <property type="project" value="UniProtKB-SubCell"/>
</dbReference>
<dbReference type="GO" id="GO:0005524">
    <property type="term" value="F:ATP binding"/>
    <property type="evidence" value="ECO:0007669"/>
    <property type="project" value="UniProtKB-UniRule"/>
</dbReference>
<dbReference type="GO" id="GO:0140662">
    <property type="term" value="F:ATP-dependent protein folding chaperone"/>
    <property type="evidence" value="ECO:0007669"/>
    <property type="project" value="InterPro"/>
</dbReference>
<dbReference type="GO" id="GO:0016853">
    <property type="term" value="F:isomerase activity"/>
    <property type="evidence" value="ECO:0007669"/>
    <property type="project" value="UniProtKB-KW"/>
</dbReference>
<dbReference type="GO" id="GO:0051082">
    <property type="term" value="F:unfolded protein binding"/>
    <property type="evidence" value="ECO:0007669"/>
    <property type="project" value="UniProtKB-UniRule"/>
</dbReference>
<dbReference type="GO" id="GO:0042026">
    <property type="term" value="P:protein refolding"/>
    <property type="evidence" value="ECO:0007669"/>
    <property type="project" value="UniProtKB-UniRule"/>
</dbReference>
<dbReference type="CDD" id="cd03344">
    <property type="entry name" value="GroEL"/>
    <property type="match status" value="1"/>
</dbReference>
<dbReference type="FunFam" id="3.50.7.10:FF:000001">
    <property type="entry name" value="60 kDa chaperonin"/>
    <property type="match status" value="1"/>
</dbReference>
<dbReference type="Gene3D" id="3.50.7.10">
    <property type="entry name" value="GroEL"/>
    <property type="match status" value="1"/>
</dbReference>
<dbReference type="Gene3D" id="1.10.560.10">
    <property type="entry name" value="GroEL-like equatorial domain"/>
    <property type="match status" value="1"/>
</dbReference>
<dbReference type="Gene3D" id="3.30.260.10">
    <property type="entry name" value="TCP-1-like chaperonin intermediate domain"/>
    <property type="match status" value="1"/>
</dbReference>
<dbReference type="HAMAP" id="MF_00600">
    <property type="entry name" value="CH60"/>
    <property type="match status" value="1"/>
</dbReference>
<dbReference type="InterPro" id="IPR018370">
    <property type="entry name" value="Chaperonin_Cpn60_CS"/>
</dbReference>
<dbReference type="InterPro" id="IPR001844">
    <property type="entry name" value="Cpn60/GroEL"/>
</dbReference>
<dbReference type="InterPro" id="IPR002423">
    <property type="entry name" value="Cpn60/GroEL/TCP-1"/>
</dbReference>
<dbReference type="InterPro" id="IPR027409">
    <property type="entry name" value="GroEL-like_apical_dom_sf"/>
</dbReference>
<dbReference type="InterPro" id="IPR027413">
    <property type="entry name" value="GROEL-like_equatorial_sf"/>
</dbReference>
<dbReference type="InterPro" id="IPR027410">
    <property type="entry name" value="TCP-1-like_intermed_sf"/>
</dbReference>
<dbReference type="NCBIfam" id="TIGR02348">
    <property type="entry name" value="GroEL"/>
    <property type="match status" value="1"/>
</dbReference>
<dbReference type="NCBIfam" id="NF000592">
    <property type="entry name" value="PRK00013.1"/>
    <property type="match status" value="1"/>
</dbReference>
<dbReference type="NCBIfam" id="NF009487">
    <property type="entry name" value="PRK12849.1"/>
    <property type="match status" value="1"/>
</dbReference>
<dbReference type="NCBIfam" id="NF009488">
    <property type="entry name" value="PRK12850.1"/>
    <property type="match status" value="1"/>
</dbReference>
<dbReference type="NCBIfam" id="NF009489">
    <property type="entry name" value="PRK12851.1"/>
    <property type="match status" value="1"/>
</dbReference>
<dbReference type="PANTHER" id="PTHR45633">
    <property type="entry name" value="60 KDA HEAT SHOCK PROTEIN, MITOCHONDRIAL"/>
    <property type="match status" value="1"/>
</dbReference>
<dbReference type="Pfam" id="PF00118">
    <property type="entry name" value="Cpn60_TCP1"/>
    <property type="match status" value="1"/>
</dbReference>
<dbReference type="PRINTS" id="PR00298">
    <property type="entry name" value="CHAPERONIN60"/>
</dbReference>
<dbReference type="SUPFAM" id="SSF52029">
    <property type="entry name" value="GroEL apical domain-like"/>
    <property type="match status" value="1"/>
</dbReference>
<dbReference type="SUPFAM" id="SSF48592">
    <property type="entry name" value="GroEL equatorial domain-like"/>
    <property type="match status" value="1"/>
</dbReference>
<dbReference type="SUPFAM" id="SSF54849">
    <property type="entry name" value="GroEL-intermediate domain like"/>
    <property type="match status" value="1"/>
</dbReference>
<dbReference type="PROSITE" id="PS00296">
    <property type="entry name" value="CHAPERONINS_CPN60"/>
    <property type="match status" value="1"/>
</dbReference>
<reference key="1">
    <citation type="journal article" date="2005" name="Nat. Biotechnol.">
        <title>Genome sequence of the chlorinated compound-respiring bacterium Dehalococcoides species strain CBDB1.</title>
        <authorList>
            <person name="Kube M."/>
            <person name="Beck A."/>
            <person name="Zinder S.H."/>
            <person name="Kuhl H."/>
            <person name="Reinhardt R."/>
            <person name="Adrian L."/>
        </authorList>
    </citation>
    <scope>NUCLEOTIDE SEQUENCE [LARGE SCALE GENOMIC DNA]</scope>
    <source>
        <strain>CBDB1</strain>
    </source>
</reference>
<keyword id="KW-0067">ATP-binding</keyword>
<keyword id="KW-0143">Chaperone</keyword>
<keyword id="KW-0963">Cytoplasm</keyword>
<keyword id="KW-0413">Isomerase</keyword>
<keyword id="KW-0547">Nucleotide-binding</keyword>
<feature type="chain" id="PRO_0000256903" description="Chaperonin GroEL">
    <location>
        <begin position="1"/>
        <end position="537"/>
    </location>
</feature>
<feature type="binding site" evidence="1">
    <location>
        <begin position="29"/>
        <end position="32"/>
    </location>
    <ligand>
        <name>ATP</name>
        <dbReference type="ChEBI" id="CHEBI:30616"/>
    </ligand>
</feature>
<feature type="binding site" evidence="1">
    <location>
        <begin position="86"/>
        <end position="90"/>
    </location>
    <ligand>
        <name>ATP</name>
        <dbReference type="ChEBI" id="CHEBI:30616"/>
    </ligand>
</feature>
<feature type="binding site" evidence="1">
    <location>
        <position position="413"/>
    </location>
    <ligand>
        <name>ATP</name>
        <dbReference type="ChEBI" id="CHEBI:30616"/>
    </ligand>
</feature>
<feature type="binding site" evidence="1">
    <location>
        <position position="492"/>
    </location>
    <ligand>
        <name>ATP</name>
        <dbReference type="ChEBI" id="CHEBI:30616"/>
    </ligand>
</feature>
<organism>
    <name type="scientific">Dehalococcoides mccartyi (strain CBDB1)</name>
    <dbReference type="NCBI Taxonomy" id="255470"/>
    <lineage>
        <taxon>Bacteria</taxon>
        <taxon>Bacillati</taxon>
        <taxon>Chloroflexota</taxon>
        <taxon>Dehalococcoidia</taxon>
        <taxon>Dehalococcoidales</taxon>
        <taxon>Dehalococcoidaceae</taxon>
        <taxon>Dehalococcoides</taxon>
    </lineage>
</organism>
<gene>
    <name evidence="1" type="primary">groEL</name>
    <name evidence="1" type="synonym">groL</name>
    <name type="ordered locus">cbdbA1393</name>
</gene>